<proteinExistence type="inferred from homology"/>
<organism>
    <name type="scientific">Streptococcus equi subsp. zooepidemicus (strain MGCS10565)</name>
    <dbReference type="NCBI Taxonomy" id="552526"/>
    <lineage>
        <taxon>Bacteria</taxon>
        <taxon>Bacillati</taxon>
        <taxon>Bacillota</taxon>
        <taxon>Bacilli</taxon>
        <taxon>Lactobacillales</taxon>
        <taxon>Streptococcaceae</taxon>
        <taxon>Streptococcus</taxon>
    </lineage>
</organism>
<protein>
    <recommendedName>
        <fullName evidence="1">Large ribosomal subunit protein uL24</fullName>
    </recommendedName>
    <alternativeName>
        <fullName evidence="2">50S ribosomal protein L24</fullName>
    </alternativeName>
</protein>
<sequence length="101" mass="10944">MFVKKGDKVRVIAGKDKGVEAVVLKALPKVNKVIVEGVAIIKKHQKPNSENPQGAIVEKEAPIHASNVQVLDKNGVAGRVGYKFVDGKKVRYNKKSGEVLD</sequence>
<gene>
    <name evidence="1" type="primary">rplX</name>
    <name type="ordered locus">Sez_0067</name>
</gene>
<comment type="function">
    <text evidence="1">One of two assembly initiator proteins, it binds directly to the 5'-end of the 23S rRNA, where it nucleates assembly of the 50S subunit.</text>
</comment>
<comment type="function">
    <text evidence="1">One of the proteins that surrounds the polypeptide exit tunnel on the outside of the subunit.</text>
</comment>
<comment type="subunit">
    <text evidence="1">Part of the 50S ribosomal subunit.</text>
</comment>
<comment type="similarity">
    <text evidence="1">Belongs to the universal ribosomal protein uL24 family.</text>
</comment>
<reference key="1">
    <citation type="journal article" date="2008" name="PLoS ONE">
        <title>Genome sequence of a lancefield group C Streptococcus zooepidemicus strain causing epidemic nephritis: new information about an old disease.</title>
        <authorList>
            <person name="Beres S.B."/>
            <person name="Sesso R."/>
            <person name="Pinto S.W.L."/>
            <person name="Hoe N.P."/>
            <person name="Porcella S.F."/>
            <person name="Deleo F.R."/>
            <person name="Musser J.M."/>
        </authorList>
    </citation>
    <scope>NUCLEOTIDE SEQUENCE [LARGE SCALE GENOMIC DNA]</scope>
    <source>
        <strain>MGCS10565</strain>
    </source>
</reference>
<evidence type="ECO:0000255" key="1">
    <source>
        <dbReference type="HAMAP-Rule" id="MF_01326"/>
    </source>
</evidence>
<evidence type="ECO:0000305" key="2"/>
<name>RL24_STREM</name>
<feature type="chain" id="PRO_1000142042" description="Large ribosomal subunit protein uL24">
    <location>
        <begin position="1"/>
        <end position="101"/>
    </location>
</feature>
<keyword id="KW-0687">Ribonucleoprotein</keyword>
<keyword id="KW-0689">Ribosomal protein</keyword>
<keyword id="KW-0694">RNA-binding</keyword>
<keyword id="KW-0699">rRNA-binding</keyword>
<dbReference type="EMBL" id="CP001129">
    <property type="protein sequence ID" value="ACG61450.1"/>
    <property type="molecule type" value="Genomic_DNA"/>
</dbReference>
<dbReference type="RefSeq" id="WP_012514741.1">
    <property type="nucleotide sequence ID" value="NC_011134.1"/>
</dbReference>
<dbReference type="SMR" id="B4U511"/>
<dbReference type="GeneID" id="83703915"/>
<dbReference type="KEGG" id="sez:Sez_0067"/>
<dbReference type="HOGENOM" id="CLU_093315_2_0_9"/>
<dbReference type="Proteomes" id="UP000001873">
    <property type="component" value="Chromosome"/>
</dbReference>
<dbReference type="GO" id="GO:1990904">
    <property type="term" value="C:ribonucleoprotein complex"/>
    <property type="evidence" value="ECO:0007669"/>
    <property type="project" value="UniProtKB-KW"/>
</dbReference>
<dbReference type="GO" id="GO:0005840">
    <property type="term" value="C:ribosome"/>
    <property type="evidence" value="ECO:0007669"/>
    <property type="project" value="UniProtKB-KW"/>
</dbReference>
<dbReference type="GO" id="GO:0019843">
    <property type="term" value="F:rRNA binding"/>
    <property type="evidence" value="ECO:0007669"/>
    <property type="project" value="UniProtKB-UniRule"/>
</dbReference>
<dbReference type="GO" id="GO:0003735">
    <property type="term" value="F:structural constituent of ribosome"/>
    <property type="evidence" value="ECO:0007669"/>
    <property type="project" value="InterPro"/>
</dbReference>
<dbReference type="GO" id="GO:0006412">
    <property type="term" value="P:translation"/>
    <property type="evidence" value="ECO:0007669"/>
    <property type="project" value="UniProtKB-UniRule"/>
</dbReference>
<dbReference type="CDD" id="cd06089">
    <property type="entry name" value="KOW_RPL26"/>
    <property type="match status" value="1"/>
</dbReference>
<dbReference type="FunFam" id="2.30.30.30:FF:000004">
    <property type="entry name" value="50S ribosomal protein L24"/>
    <property type="match status" value="1"/>
</dbReference>
<dbReference type="Gene3D" id="2.30.30.30">
    <property type="match status" value="1"/>
</dbReference>
<dbReference type="HAMAP" id="MF_01326_B">
    <property type="entry name" value="Ribosomal_uL24_B"/>
    <property type="match status" value="1"/>
</dbReference>
<dbReference type="InterPro" id="IPR005824">
    <property type="entry name" value="KOW"/>
</dbReference>
<dbReference type="InterPro" id="IPR014722">
    <property type="entry name" value="Rib_uL2_dom2"/>
</dbReference>
<dbReference type="InterPro" id="IPR003256">
    <property type="entry name" value="Ribosomal_uL24"/>
</dbReference>
<dbReference type="InterPro" id="IPR005825">
    <property type="entry name" value="Ribosomal_uL24_CS"/>
</dbReference>
<dbReference type="InterPro" id="IPR041988">
    <property type="entry name" value="Ribosomal_uL24_KOW"/>
</dbReference>
<dbReference type="InterPro" id="IPR008991">
    <property type="entry name" value="Translation_prot_SH3-like_sf"/>
</dbReference>
<dbReference type="NCBIfam" id="TIGR01079">
    <property type="entry name" value="rplX_bact"/>
    <property type="match status" value="1"/>
</dbReference>
<dbReference type="PANTHER" id="PTHR12903">
    <property type="entry name" value="MITOCHONDRIAL RIBOSOMAL PROTEIN L24"/>
    <property type="match status" value="1"/>
</dbReference>
<dbReference type="Pfam" id="PF00467">
    <property type="entry name" value="KOW"/>
    <property type="match status" value="1"/>
</dbReference>
<dbReference type="Pfam" id="PF17136">
    <property type="entry name" value="ribosomal_L24"/>
    <property type="match status" value="1"/>
</dbReference>
<dbReference type="SMART" id="SM00739">
    <property type="entry name" value="KOW"/>
    <property type="match status" value="1"/>
</dbReference>
<dbReference type="SUPFAM" id="SSF50104">
    <property type="entry name" value="Translation proteins SH3-like domain"/>
    <property type="match status" value="1"/>
</dbReference>
<dbReference type="PROSITE" id="PS01108">
    <property type="entry name" value="RIBOSOMAL_L24"/>
    <property type="match status" value="1"/>
</dbReference>
<accession>B4U511</accession>